<reference key="1">
    <citation type="journal article" date="2009" name="J. Bacteriol.">
        <title>Genome sequences of three Agrobacterium biovars help elucidate the evolution of multichromosome genomes in bacteria.</title>
        <authorList>
            <person name="Slater S.C."/>
            <person name="Goldman B.S."/>
            <person name="Goodner B."/>
            <person name="Setubal J.C."/>
            <person name="Farrand S.K."/>
            <person name="Nester E.W."/>
            <person name="Burr T.J."/>
            <person name="Banta L."/>
            <person name="Dickerman A.W."/>
            <person name="Paulsen I."/>
            <person name="Otten L."/>
            <person name="Suen G."/>
            <person name="Welch R."/>
            <person name="Almeida N.F."/>
            <person name="Arnold F."/>
            <person name="Burton O.T."/>
            <person name="Du Z."/>
            <person name="Ewing A."/>
            <person name="Godsy E."/>
            <person name="Heisel S."/>
            <person name="Houmiel K.L."/>
            <person name="Jhaveri J."/>
            <person name="Lu J."/>
            <person name="Miller N.M."/>
            <person name="Norton S."/>
            <person name="Chen Q."/>
            <person name="Phoolcharoen W."/>
            <person name="Ohlin V."/>
            <person name="Ondrusek D."/>
            <person name="Pride N."/>
            <person name="Stricklin S.L."/>
            <person name="Sun J."/>
            <person name="Wheeler C."/>
            <person name="Wilson L."/>
            <person name="Zhu H."/>
            <person name="Wood D.W."/>
        </authorList>
    </citation>
    <scope>NUCLEOTIDE SEQUENCE [LARGE SCALE GENOMIC DNA]</scope>
    <source>
        <strain>ATCC BAA-846 / DSM 112012 / S4</strain>
    </source>
</reference>
<comment type="catalytic activity">
    <reaction evidence="1">
        <text>tRNA(Phe) + L-phenylalanine + ATP = L-phenylalanyl-tRNA(Phe) + AMP + diphosphate + H(+)</text>
        <dbReference type="Rhea" id="RHEA:19413"/>
        <dbReference type="Rhea" id="RHEA-COMP:9668"/>
        <dbReference type="Rhea" id="RHEA-COMP:9699"/>
        <dbReference type="ChEBI" id="CHEBI:15378"/>
        <dbReference type="ChEBI" id="CHEBI:30616"/>
        <dbReference type="ChEBI" id="CHEBI:33019"/>
        <dbReference type="ChEBI" id="CHEBI:58095"/>
        <dbReference type="ChEBI" id="CHEBI:78442"/>
        <dbReference type="ChEBI" id="CHEBI:78531"/>
        <dbReference type="ChEBI" id="CHEBI:456215"/>
        <dbReference type="EC" id="6.1.1.20"/>
    </reaction>
</comment>
<comment type="cofactor">
    <cofactor evidence="1">
        <name>Mg(2+)</name>
        <dbReference type="ChEBI" id="CHEBI:18420"/>
    </cofactor>
    <text evidence="1">Binds 2 magnesium ions per tetramer.</text>
</comment>
<comment type="subunit">
    <text evidence="1">Tetramer of two alpha and two beta subunits.</text>
</comment>
<comment type="subcellular location">
    <subcellularLocation>
        <location evidence="1">Cytoplasm</location>
    </subcellularLocation>
</comment>
<comment type="similarity">
    <text evidence="1">Belongs to the class-II aminoacyl-tRNA synthetase family. Phe-tRNA synthetase alpha subunit type 1 subfamily.</text>
</comment>
<proteinExistence type="inferred from homology"/>
<evidence type="ECO:0000255" key="1">
    <source>
        <dbReference type="HAMAP-Rule" id="MF_00281"/>
    </source>
</evidence>
<gene>
    <name evidence="1" type="primary">pheS</name>
    <name type="ordered locus">Avi_0208</name>
</gene>
<name>SYFA_ALLAM</name>
<protein>
    <recommendedName>
        <fullName evidence="1">Phenylalanine--tRNA ligase alpha subunit</fullName>
        <ecNumber evidence="1">6.1.1.20</ecNumber>
    </recommendedName>
    <alternativeName>
        <fullName evidence="1">Phenylalanyl-tRNA synthetase alpha subunit</fullName>
        <shortName evidence="1">PheRS</shortName>
    </alternativeName>
</protein>
<keyword id="KW-0030">Aminoacyl-tRNA synthetase</keyword>
<keyword id="KW-0067">ATP-binding</keyword>
<keyword id="KW-0963">Cytoplasm</keyword>
<keyword id="KW-0436">Ligase</keyword>
<keyword id="KW-0460">Magnesium</keyword>
<keyword id="KW-0479">Metal-binding</keyword>
<keyword id="KW-0547">Nucleotide-binding</keyword>
<keyword id="KW-0648">Protein biosynthesis</keyword>
<keyword id="KW-1185">Reference proteome</keyword>
<dbReference type="EC" id="6.1.1.20" evidence="1"/>
<dbReference type="EMBL" id="CP000633">
    <property type="protein sequence ID" value="ACM35126.1"/>
    <property type="molecule type" value="Genomic_DNA"/>
</dbReference>
<dbReference type="RefSeq" id="WP_012654656.1">
    <property type="nucleotide sequence ID" value="NC_011989.1"/>
</dbReference>
<dbReference type="SMR" id="B9JYN0"/>
<dbReference type="STRING" id="311402.Avi_0208"/>
<dbReference type="KEGG" id="avi:Avi_0208"/>
<dbReference type="eggNOG" id="COG0016">
    <property type="taxonomic scope" value="Bacteria"/>
</dbReference>
<dbReference type="HOGENOM" id="CLU_025086_0_1_5"/>
<dbReference type="Proteomes" id="UP000001596">
    <property type="component" value="Chromosome 1"/>
</dbReference>
<dbReference type="GO" id="GO:0005737">
    <property type="term" value="C:cytoplasm"/>
    <property type="evidence" value="ECO:0007669"/>
    <property type="project" value="UniProtKB-SubCell"/>
</dbReference>
<dbReference type="GO" id="GO:0005524">
    <property type="term" value="F:ATP binding"/>
    <property type="evidence" value="ECO:0007669"/>
    <property type="project" value="UniProtKB-UniRule"/>
</dbReference>
<dbReference type="GO" id="GO:0000287">
    <property type="term" value="F:magnesium ion binding"/>
    <property type="evidence" value="ECO:0007669"/>
    <property type="project" value="UniProtKB-UniRule"/>
</dbReference>
<dbReference type="GO" id="GO:0004826">
    <property type="term" value="F:phenylalanine-tRNA ligase activity"/>
    <property type="evidence" value="ECO:0007669"/>
    <property type="project" value="UniProtKB-UniRule"/>
</dbReference>
<dbReference type="GO" id="GO:0000049">
    <property type="term" value="F:tRNA binding"/>
    <property type="evidence" value="ECO:0007669"/>
    <property type="project" value="InterPro"/>
</dbReference>
<dbReference type="GO" id="GO:0006432">
    <property type="term" value="P:phenylalanyl-tRNA aminoacylation"/>
    <property type="evidence" value="ECO:0007669"/>
    <property type="project" value="UniProtKB-UniRule"/>
</dbReference>
<dbReference type="CDD" id="cd00496">
    <property type="entry name" value="PheRS_alpha_core"/>
    <property type="match status" value="1"/>
</dbReference>
<dbReference type="FunFam" id="3.30.930.10:FF:000003">
    <property type="entry name" value="Phenylalanine--tRNA ligase alpha subunit"/>
    <property type="match status" value="1"/>
</dbReference>
<dbReference type="Gene3D" id="3.30.930.10">
    <property type="entry name" value="Bira Bifunctional Protein, Domain 2"/>
    <property type="match status" value="1"/>
</dbReference>
<dbReference type="HAMAP" id="MF_00281">
    <property type="entry name" value="Phe_tRNA_synth_alpha1"/>
    <property type="match status" value="1"/>
</dbReference>
<dbReference type="InterPro" id="IPR006195">
    <property type="entry name" value="aa-tRNA-synth_II"/>
</dbReference>
<dbReference type="InterPro" id="IPR045864">
    <property type="entry name" value="aa-tRNA-synth_II/BPL/LPL"/>
</dbReference>
<dbReference type="InterPro" id="IPR004529">
    <property type="entry name" value="Phe-tRNA-synth_IIc_asu"/>
</dbReference>
<dbReference type="InterPro" id="IPR004188">
    <property type="entry name" value="Phe-tRNA_ligase_II_N"/>
</dbReference>
<dbReference type="InterPro" id="IPR022911">
    <property type="entry name" value="Phe_tRNA_ligase_alpha1_bac"/>
</dbReference>
<dbReference type="InterPro" id="IPR002319">
    <property type="entry name" value="Phenylalanyl-tRNA_Synthase"/>
</dbReference>
<dbReference type="InterPro" id="IPR010978">
    <property type="entry name" value="tRNA-bd_arm"/>
</dbReference>
<dbReference type="NCBIfam" id="TIGR00468">
    <property type="entry name" value="pheS"/>
    <property type="match status" value="1"/>
</dbReference>
<dbReference type="PANTHER" id="PTHR11538:SF41">
    <property type="entry name" value="PHENYLALANINE--TRNA LIGASE, MITOCHONDRIAL"/>
    <property type="match status" value="1"/>
</dbReference>
<dbReference type="PANTHER" id="PTHR11538">
    <property type="entry name" value="PHENYLALANYL-TRNA SYNTHETASE"/>
    <property type="match status" value="1"/>
</dbReference>
<dbReference type="Pfam" id="PF02912">
    <property type="entry name" value="Phe_tRNA-synt_N"/>
    <property type="match status" value="1"/>
</dbReference>
<dbReference type="Pfam" id="PF01409">
    <property type="entry name" value="tRNA-synt_2d"/>
    <property type="match status" value="1"/>
</dbReference>
<dbReference type="SUPFAM" id="SSF55681">
    <property type="entry name" value="Class II aaRS and biotin synthetases"/>
    <property type="match status" value="1"/>
</dbReference>
<dbReference type="SUPFAM" id="SSF46589">
    <property type="entry name" value="tRNA-binding arm"/>
    <property type="match status" value="1"/>
</dbReference>
<dbReference type="PROSITE" id="PS50862">
    <property type="entry name" value="AA_TRNA_LIGASE_II"/>
    <property type="match status" value="1"/>
</dbReference>
<accession>B9JYN0</accession>
<feature type="chain" id="PRO_1000199293" description="Phenylalanine--tRNA ligase alpha subunit">
    <location>
        <begin position="1"/>
        <end position="361"/>
    </location>
</feature>
<feature type="binding site" evidence="1">
    <location>
        <position position="260"/>
    </location>
    <ligand>
        <name>Mg(2+)</name>
        <dbReference type="ChEBI" id="CHEBI:18420"/>
        <note>shared with beta subunit</note>
    </ligand>
</feature>
<organism>
    <name type="scientific">Allorhizobium ampelinum (strain ATCC BAA-846 / DSM 112012 / S4)</name>
    <name type="common">Agrobacterium vitis (strain S4)</name>
    <dbReference type="NCBI Taxonomy" id="311402"/>
    <lineage>
        <taxon>Bacteria</taxon>
        <taxon>Pseudomonadati</taxon>
        <taxon>Pseudomonadota</taxon>
        <taxon>Alphaproteobacteria</taxon>
        <taxon>Hyphomicrobiales</taxon>
        <taxon>Rhizobiaceae</taxon>
        <taxon>Rhizobium/Agrobacterium group</taxon>
        <taxon>Allorhizobium</taxon>
        <taxon>Allorhizobium ampelinum</taxon>
    </lineage>
</organism>
<sequence>MSDLESLKTSLLADIAAASDEVGIEAVRLAAMGKKGSVSELLKTLGSMTPEERQTRGAAINALKNEITEQLTAKKTELKDAAINARLKAETLDVSLPVRSSPAERGRIHPISQIVDEITAIFADMGFSIAEGPDIETDYYNFTALNFPEGHPAREMHDTFFLQPDANGERKVLRTHTSPVQVRTMEAQKPPIRIVIPGKTYRQDSDATHSPMFHQVEGLVIDKTANVGHLRWILEEFCKTFFEVDSVTMRFRPSFFPFTEPSFEVDIQCDRSSGPIVKFGEGKDWMEILGCGMVHPNVLRAGGLDPDEYQGFAWGMGLDRIAMLKYGMPDLRDFFNADVRWMSHYGFRPLDVPTLFGGLSV</sequence>